<reference key="1">
    <citation type="submission" date="2007-04" db="EMBL/GenBank/DDBJ databases">
        <title>Complete sequence of Roseiflexus sp. RS-1.</title>
        <authorList>
            <consortium name="US DOE Joint Genome Institute"/>
            <person name="Copeland A."/>
            <person name="Lucas S."/>
            <person name="Lapidus A."/>
            <person name="Barry K."/>
            <person name="Detter J.C."/>
            <person name="Glavina del Rio T."/>
            <person name="Hammon N."/>
            <person name="Israni S."/>
            <person name="Dalin E."/>
            <person name="Tice H."/>
            <person name="Pitluck S."/>
            <person name="Chertkov O."/>
            <person name="Brettin T."/>
            <person name="Bruce D."/>
            <person name="Han C."/>
            <person name="Schmutz J."/>
            <person name="Larimer F."/>
            <person name="Land M."/>
            <person name="Hauser L."/>
            <person name="Kyrpides N."/>
            <person name="Mikhailova N."/>
            <person name="Bryant D.A."/>
            <person name="Richardson P."/>
        </authorList>
    </citation>
    <scope>NUCLEOTIDE SEQUENCE [LARGE SCALE GENOMIC DNA]</scope>
    <source>
        <strain>RS-1</strain>
    </source>
</reference>
<proteinExistence type="inferred from homology"/>
<accession>A5UTB6</accession>
<gene>
    <name evidence="1" type="primary">pgk</name>
    <name type="ordered locus">RoseRS_1473</name>
</gene>
<organism>
    <name type="scientific">Roseiflexus sp. (strain RS-1)</name>
    <dbReference type="NCBI Taxonomy" id="357808"/>
    <lineage>
        <taxon>Bacteria</taxon>
        <taxon>Bacillati</taxon>
        <taxon>Chloroflexota</taxon>
        <taxon>Chloroflexia</taxon>
        <taxon>Chloroflexales</taxon>
        <taxon>Roseiflexineae</taxon>
        <taxon>Roseiflexaceae</taxon>
        <taxon>Roseiflexus</taxon>
    </lineage>
</organism>
<keyword id="KW-0067">ATP-binding</keyword>
<keyword id="KW-0963">Cytoplasm</keyword>
<keyword id="KW-0324">Glycolysis</keyword>
<keyword id="KW-0418">Kinase</keyword>
<keyword id="KW-0547">Nucleotide-binding</keyword>
<keyword id="KW-0808">Transferase</keyword>
<name>PGK_ROSS1</name>
<protein>
    <recommendedName>
        <fullName evidence="1">Phosphoglycerate kinase</fullName>
        <ecNumber evidence="1">2.7.2.3</ecNumber>
    </recommendedName>
</protein>
<feature type="chain" id="PRO_1000058049" description="Phosphoglycerate kinase">
    <location>
        <begin position="1"/>
        <end position="395"/>
    </location>
</feature>
<feature type="binding site" evidence="1">
    <location>
        <begin position="21"/>
        <end position="23"/>
    </location>
    <ligand>
        <name>substrate</name>
    </ligand>
</feature>
<feature type="binding site" evidence="1">
    <location>
        <position position="36"/>
    </location>
    <ligand>
        <name>substrate</name>
    </ligand>
</feature>
<feature type="binding site" evidence="1">
    <location>
        <begin position="59"/>
        <end position="62"/>
    </location>
    <ligand>
        <name>substrate</name>
    </ligand>
</feature>
<feature type="binding site" evidence="1">
    <location>
        <position position="120"/>
    </location>
    <ligand>
        <name>substrate</name>
    </ligand>
</feature>
<feature type="binding site" evidence="1">
    <location>
        <position position="153"/>
    </location>
    <ligand>
        <name>substrate</name>
    </ligand>
</feature>
<feature type="binding site" evidence="1">
    <location>
        <position position="203"/>
    </location>
    <ligand>
        <name>ATP</name>
        <dbReference type="ChEBI" id="CHEBI:30616"/>
    </ligand>
</feature>
<feature type="binding site" evidence="1">
    <location>
        <position position="325"/>
    </location>
    <ligand>
        <name>ATP</name>
        <dbReference type="ChEBI" id="CHEBI:30616"/>
    </ligand>
</feature>
<feature type="binding site" evidence="1">
    <location>
        <begin position="351"/>
        <end position="354"/>
    </location>
    <ligand>
        <name>ATP</name>
        <dbReference type="ChEBI" id="CHEBI:30616"/>
    </ligand>
</feature>
<comment type="catalytic activity">
    <reaction evidence="1">
        <text>(2R)-3-phosphoglycerate + ATP = (2R)-3-phospho-glyceroyl phosphate + ADP</text>
        <dbReference type="Rhea" id="RHEA:14801"/>
        <dbReference type="ChEBI" id="CHEBI:30616"/>
        <dbReference type="ChEBI" id="CHEBI:57604"/>
        <dbReference type="ChEBI" id="CHEBI:58272"/>
        <dbReference type="ChEBI" id="CHEBI:456216"/>
        <dbReference type="EC" id="2.7.2.3"/>
    </reaction>
</comment>
<comment type="pathway">
    <text evidence="1">Carbohydrate degradation; glycolysis; pyruvate from D-glyceraldehyde 3-phosphate: step 2/5.</text>
</comment>
<comment type="subunit">
    <text evidence="1">Monomer.</text>
</comment>
<comment type="subcellular location">
    <subcellularLocation>
        <location evidence="1">Cytoplasm</location>
    </subcellularLocation>
</comment>
<comment type="similarity">
    <text evidence="1">Belongs to the phosphoglycerate kinase family.</text>
</comment>
<dbReference type="EC" id="2.7.2.3" evidence="1"/>
<dbReference type="EMBL" id="CP000686">
    <property type="protein sequence ID" value="ABQ89869.1"/>
    <property type="molecule type" value="Genomic_DNA"/>
</dbReference>
<dbReference type="RefSeq" id="WP_011956220.1">
    <property type="nucleotide sequence ID" value="NC_009523.1"/>
</dbReference>
<dbReference type="SMR" id="A5UTB6"/>
<dbReference type="STRING" id="357808.RoseRS_1473"/>
<dbReference type="KEGG" id="rrs:RoseRS_1473"/>
<dbReference type="eggNOG" id="COG0126">
    <property type="taxonomic scope" value="Bacteria"/>
</dbReference>
<dbReference type="HOGENOM" id="CLU_025427_0_2_0"/>
<dbReference type="OrthoDB" id="9808460at2"/>
<dbReference type="UniPathway" id="UPA00109">
    <property type="reaction ID" value="UER00185"/>
</dbReference>
<dbReference type="Proteomes" id="UP000006554">
    <property type="component" value="Chromosome"/>
</dbReference>
<dbReference type="GO" id="GO:0005829">
    <property type="term" value="C:cytosol"/>
    <property type="evidence" value="ECO:0007669"/>
    <property type="project" value="TreeGrafter"/>
</dbReference>
<dbReference type="GO" id="GO:0043531">
    <property type="term" value="F:ADP binding"/>
    <property type="evidence" value="ECO:0007669"/>
    <property type="project" value="TreeGrafter"/>
</dbReference>
<dbReference type="GO" id="GO:0005524">
    <property type="term" value="F:ATP binding"/>
    <property type="evidence" value="ECO:0007669"/>
    <property type="project" value="UniProtKB-KW"/>
</dbReference>
<dbReference type="GO" id="GO:0004618">
    <property type="term" value="F:phosphoglycerate kinase activity"/>
    <property type="evidence" value="ECO:0007669"/>
    <property type="project" value="UniProtKB-UniRule"/>
</dbReference>
<dbReference type="GO" id="GO:0006094">
    <property type="term" value="P:gluconeogenesis"/>
    <property type="evidence" value="ECO:0007669"/>
    <property type="project" value="TreeGrafter"/>
</dbReference>
<dbReference type="GO" id="GO:0006096">
    <property type="term" value="P:glycolytic process"/>
    <property type="evidence" value="ECO:0007669"/>
    <property type="project" value="UniProtKB-UniRule"/>
</dbReference>
<dbReference type="CDD" id="cd00318">
    <property type="entry name" value="Phosphoglycerate_kinase"/>
    <property type="match status" value="1"/>
</dbReference>
<dbReference type="FunFam" id="3.40.50.1260:FF:000003">
    <property type="entry name" value="Phosphoglycerate kinase"/>
    <property type="match status" value="1"/>
</dbReference>
<dbReference type="FunFam" id="3.40.50.1260:FF:000006">
    <property type="entry name" value="Phosphoglycerate kinase"/>
    <property type="match status" value="1"/>
</dbReference>
<dbReference type="Gene3D" id="3.40.50.1260">
    <property type="entry name" value="Phosphoglycerate kinase, N-terminal domain"/>
    <property type="match status" value="2"/>
</dbReference>
<dbReference type="HAMAP" id="MF_00145">
    <property type="entry name" value="Phosphoglyc_kinase"/>
    <property type="match status" value="1"/>
</dbReference>
<dbReference type="InterPro" id="IPR001576">
    <property type="entry name" value="Phosphoglycerate_kinase"/>
</dbReference>
<dbReference type="InterPro" id="IPR015824">
    <property type="entry name" value="Phosphoglycerate_kinase_N"/>
</dbReference>
<dbReference type="InterPro" id="IPR036043">
    <property type="entry name" value="Phosphoglycerate_kinase_sf"/>
</dbReference>
<dbReference type="PANTHER" id="PTHR11406">
    <property type="entry name" value="PHOSPHOGLYCERATE KINASE"/>
    <property type="match status" value="1"/>
</dbReference>
<dbReference type="PANTHER" id="PTHR11406:SF23">
    <property type="entry name" value="PHOSPHOGLYCERATE KINASE 1, CHLOROPLASTIC-RELATED"/>
    <property type="match status" value="1"/>
</dbReference>
<dbReference type="Pfam" id="PF00162">
    <property type="entry name" value="PGK"/>
    <property type="match status" value="1"/>
</dbReference>
<dbReference type="PIRSF" id="PIRSF000724">
    <property type="entry name" value="Pgk"/>
    <property type="match status" value="1"/>
</dbReference>
<dbReference type="PRINTS" id="PR00477">
    <property type="entry name" value="PHGLYCKINASE"/>
</dbReference>
<dbReference type="SUPFAM" id="SSF53748">
    <property type="entry name" value="Phosphoglycerate kinase"/>
    <property type="match status" value="1"/>
</dbReference>
<sequence length="395" mass="41712">MAKKTIRDIDWSGKRALVRVDFNVPLENGQITDDTRIRAALPTIRYLLEHGAAVILMSHLGRPKNKVVESMRLAPVVARLAELLPEAKAIKGTQATTGPAAEAAAQDLKPGEVLVLENTRFDPREEANDESMARELAKLGDVYVNDAFGSAHRAHASTEGVARFLPAVAGFLMEAELAALQGALENPTRPFVTIIGGAKISDKIGVIENLLGKVDALLIGGGMANTFLLAQGYEMGDSLVEPDSVPVAKDLLEKAASRGVRFMLPTDVVIADAFSADANRRVVSVGDIPPGWRVLDIGPETVRAYTEIITTAQTVIWNGPMGVFELAPFAEGTRAIAQAMANCPGMTIVGGGDSVAAVEQMGLADKIRHISTGGGASLELLEGRILPGVAALNDA</sequence>
<evidence type="ECO:0000255" key="1">
    <source>
        <dbReference type="HAMAP-Rule" id="MF_00145"/>
    </source>
</evidence>